<evidence type="ECO:0000250" key="1">
    <source>
        <dbReference type="UniProtKB" id="P22289"/>
    </source>
</evidence>
<evidence type="ECO:0000305" key="2"/>
<sequence>MSNALTNIFYKYVARRNSTWMAGAILGAFVLDSTVSGAVNTFFDSVNKGKLWKDVYAERVKKGISQ</sequence>
<comment type="function">
    <text evidence="1">Component of the ubiquinol-cytochrome c oxidoreductase, a multisubunit transmembrane complex that is part of the mitochondrial electron transport chain which drives oxidative phosphorylation. The respiratory chain contains 3 multisubunit complexes succinate dehydrogenase (complex II, CII), ubiquinol-cytochrome c oxidoreductase (cytochrome b-c1 complex, complex III, CIII) and cytochrome c oxidase (complex IV, CIV), that cooperate to transfer electrons derived from NADH and succinate to molecular oxygen, creating an electrochemical gradient over the inner membrane that drives transmembrane transport and the ATP synthase. The cytochrome b-c1 complex catalyzes electron transfer from ubiquinol to cytochrome c, linking this redox reaction to translocation of protons across the mitochondrial inner membrane, with protons being carried across the membrane as hydrogens on the quinol. In the process called Q cycle, 2 protons are consumed from the matrix, 4 protons are released into the intermembrane space and 2 electrons are passed to cytochrome c.</text>
</comment>
<comment type="subunit">
    <text evidence="1">Component of the ubiquinol-cytochrome c oxidoreductase (cytochrome b-c1 complex, complex III, CIII), a multisubunit enzyme composed of 3 respiratory subunits cytochrome b, cytochrome c1 and Rieske protein, 2 core protein subunits, and additional low-molecular weight protein subunits. The complex exists as an obligatory dimer and forms supercomplexes (SCs) in the inner mitochondrial membrane with cytochrome c oxidase (complex IV, CIV).</text>
</comment>
<comment type="subcellular location">
    <subcellularLocation>
        <location evidence="1">Mitochondrion inner membrane</location>
        <topology evidence="1">Single-pass membrane protein</topology>
    </subcellularLocation>
</comment>
<comment type="similarity">
    <text evidence="2">Belongs to the UQCR10/QCR9 family.</text>
</comment>
<feature type="chain" id="PRO_0000330332" description="Probable cytochrome b-c1 complex subunit 9">
    <location>
        <begin position="1"/>
        <end position="66"/>
    </location>
</feature>
<feature type="topological domain" description="Mitochondrial matrix" evidence="1">
    <location>
        <begin position="1"/>
        <end position="20"/>
    </location>
</feature>
<feature type="transmembrane region" description="Helical" evidence="1">
    <location>
        <begin position="21"/>
        <end position="46"/>
    </location>
</feature>
<feature type="topological domain" description="Mitochondrial intermembrane" evidence="1">
    <location>
        <begin position="47"/>
        <end position="66"/>
    </location>
</feature>
<accession>Q54QR8</accession>
<reference key="1">
    <citation type="journal article" date="2005" name="Nature">
        <title>The genome of the social amoeba Dictyostelium discoideum.</title>
        <authorList>
            <person name="Eichinger L."/>
            <person name="Pachebat J.A."/>
            <person name="Gloeckner G."/>
            <person name="Rajandream M.A."/>
            <person name="Sucgang R."/>
            <person name="Berriman M."/>
            <person name="Song J."/>
            <person name="Olsen R."/>
            <person name="Szafranski K."/>
            <person name="Xu Q."/>
            <person name="Tunggal B."/>
            <person name="Kummerfeld S."/>
            <person name="Madera M."/>
            <person name="Konfortov B.A."/>
            <person name="Rivero F."/>
            <person name="Bankier A.T."/>
            <person name="Lehmann R."/>
            <person name="Hamlin N."/>
            <person name="Davies R."/>
            <person name="Gaudet P."/>
            <person name="Fey P."/>
            <person name="Pilcher K."/>
            <person name="Chen G."/>
            <person name="Saunders D."/>
            <person name="Sodergren E.J."/>
            <person name="Davis P."/>
            <person name="Kerhornou A."/>
            <person name="Nie X."/>
            <person name="Hall N."/>
            <person name="Anjard C."/>
            <person name="Hemphill L."/>
            <person name="Bason N."/>
            <person name="Farbrother P."/>
            <person name="Desany B."/>
            <person name="Just E."/>
            <person name="Morio T."/>
            <person name="Rost R."/>
            <person name="Churcher C.M."/>
            <person name="Cooper J."/>
            <person name="Haydock S."/>
            <person name="van Driessche N."/>
            <person name="Cronin A."/>
            <person name="Goodhead I."/>
            <person name="Muzny D.M."/>
            <person name="Mourier T."/>
            <person name="Pain A."/>
            <person name="Lu M."/>
            <person name="Harper D."/>
            <person name="Lindsay R."/>
            <person name="Hauser H."/>
            <person name="James K.D."/>
            <person name="Quiles M."/>
            <person name="Madan Babu M."/>
            <person name="Saito T."/>
            <person name="Buchrieser C."/>
            <person name="Wardroper A."/>
            <person name="Felder M."/>
            <person name="Thangavelu M."/>
            <person name="Johnson D."/>
            <person name="Knights A."/>
            <person name="Loulseged H."/>
            <person name="Mungall K.L."/>
            <person name="Oliver K."/>
            <person name="Price C."/>
            <person name="Quail M.A."/>
            <person name="Urushihara H."/>
            <person name="Hernandez J."/>
            <person name="Rabbinowitsch E."/>
            <person name="Steffen D."/>
            <person name="Sanders M."/>
            <person name="Ma J."/>
            <person name="Kohara Y."/>
            <person name="Sharp S."/>
            <person name="Simmonds M.N."/>
            <person name="Spiegler S."/>
            <person name="Tivey A."/>
            <person name="Sugano S."/>
            <person name="White B."/>
            <person name="Walker D."/>
            <person name="Woodward J.R."/>
            <person name="Winckler T."/>
            <person name="Tanaka Y."/>
            <person name="Shaulsky G."/>
            <person name="Schleicher M."/>
            <person name="Weinstock G.M."/>
            <person name="Rosenthal A."/>
            <person name="Cox E.C."/>
            <person name="Chisholm R.L."/>
            <person name="Gibbs R.A."/>
            <person name="Loomis W.F."/>
            <person name="Platzer M."/>
            <person name="Kay R.R."/>
            <person name="Williams J.G."/>
            <person name="Dear P.H."/>
            <person name="Noegel A.A."/>
            <person name="Barrell B.G."/>
            <person name="Kuspa A."/>
        </authorList>
    </citation>
    <scope>NUCLEOTIDE SEQUENCE [LARGE SCALE GENOMIC DNA]</scope>
    <source>
        <strain>AX4</strain>
    </source>
</reference>
<protein>
    <recommendedName>
        <fullName>Probable cytochrome b-c1 complex subunit 9</fullName>
    </recommendedName>
    <alternativeName>
        <fullName>Ubiquinol-cytochrome c reductase complex subunit 9</fullName>
    </alternativeName>
</protein>
<name>QCR9_DICDI</name>
<dbReference type="EMBL" id="AAFI02000056">
    <property type="protein sequence ID" value="EAL65601.1"/>
    <property type="molecule type" value="Genomic_DNA"/>
</dbReference>
<dbReference type="RefSeq" id="XP_638955.1">
    <property type="nucleotide sequence ID" value="XM_633863.1"/>
</dbReference>
<dbReference type="SMR" id="Q54QR8"/>
<dbReference type="FunCoup" id="Q54QR8">
    <property type="interactions" value="13"/>
</dbReference>
<dbReference type="STRING" id="44689.Q54QR8"/>
<dbReference type="PaxDb" id="44689-DDB0238416"/>
<dbReference type="EnsemblProtists" id="EAL65601">
    <property type="protein sequence ID" value="EAL65601"/>
    <property type="gene ID" value="DDB_G0283669"/>
</dbReference>
<dbReference type="GeneID" id="8624195"/>
<dbReference type="KEGG" id="ddi:DDB_G0283669"/>
<dbReference type="dictyBase" id="DDB_G0283669"/>
<dbReference type="VEuPathDB" id="AmoebaDB:DDB_G0283669"/>
<dbReference type="eggNOG" id="ENOG502RIH5">
    <property type="taxonomic scope" value="Eukaryota"/>
</dbReference>
<dbReference type="HOGENOM" id="CLU_171977_2_0_1"/>
<dbReference type="InParanoid" id="Q54QR8"/>
<dbReference type="OMA" id="NSTWMAG"/>
<dbReference type="PhylomeDB" id="Q54QR8"/>
<dbReference type="Reactome" id="R-DDI-611105">
    <property type="pathway name" value="Respiratory electron transport"/>
</dbReference>
<dbReference type="PRO" id="PR:Q54QR8"/>
<dbReference type="Proteomes" id="UP000002195">
    <property type="component" value="Chromosome 4"/>
</dbReference>
<dbReference type="GO" id="GO:0005743">
    <property type="term" value="C:mitochondrial inner membrane"/>
    <property type="evidence" value="ECO:0007669"/>
    <property type="project" value="UniProtKB-SubCell"/>
</dbReference>
<dbReference type="GO" id="GO:0045275">
    <property type="term" value="C:respiratory chain complex III"/>
    <property type="evidence" value="ECO:0000318"/>
    <property type="project" value="GO_Central"/>
</dbReference>
<dbReference type="GO" id="GO:0006122">
    <property type="term" value="P:mitochondrial electron transport, ubiquinol to cytochrome c"/>
    <property type="evidence" value="ECO:0000318"/>
    <property type="project" value="GO_Central"/>
</dbReference>
<dbReference type="FunFam" id="1.20.5.260:FF:000001">
    <property type="entry name" value="Cytochrome b-c1 complex subunit 9"/>
    <property type="match status" value="1"/>
</dbReference>
<dbReference type="Gene3D" id="1.20.5.260">
    <property type="entry name" value="Cytochrome b-c1 complex subunit 9"/>
    <property type="match status" value="1"/>
</dbReference>
<dbReference type="InterPro" id="IPR008027">
    <property type="entry name" value="QCR9"/>
</dbReference>
<dbReference type="InterPro" id="IPR036656">
    <property type="entry name" value="QCR9_sf"/>
</dbReference>
<dbReference type="PANTHER" id="PTHR12980:SF0">
    <property type="entry name" value="CYTOCHROME B-C1 COMPLEX SUBUNIT 9"/>
    <property type="match status" value="1"/>
</dbReference>
<dbReference type="PANTHER" id="PTHR12980">
    <property type="entry name" value="UBIQUINOL-CYTOCHROME C REDUCTASE COMPLEX, SUBUNIT X"/>
    <property type="match status" value="1"/>
</dbReference>
<dbReference type="Pfam" id="PF05365">
    <property type="entry name" value="UCR_UQCRX_QCR9"/>
    <property type="match status" value="1"/>
</dbReference>
<dbReference type="SUPFAM" id="SSF81514">
    <property type="entry name" value="Subunit X (non-heme 7 kDa protein) of cytochrome bc1 complex (Ubiquinol-cytochrome c reductase)"/>
    <property type="match status" value="1"/>
</dbReference>
<keyword id="KW-0249">Electron transport</keyword>
<keyword id="KW-0472">Membrane</keyword>
<keyword id="KW-0496">Mitochondrion</keyword>
<keyword id="KW-0999">Mitochondrion inner membrane</keyword>
<keyword id="KW-1185">Reference proteome</keyword>
<keyword id="KW-0679">Respiratory chain</keyword>
<keyword id="KW-0812">Transmembrane</keyword>
<keyword id="KW-1133">Transmembrane helix</keyword>
<keyword id="KW-0813">Transport</keyword>
<proteinExistence type="inferred from homology"/>
<gene>
    <name type="ORF">DDB_G0283669</name>
</gene>
<organism>
    <name type="scientific">Dictyostelium discoideum</name>
    <name type="common">Social amoeba</name>
    <dbReference type="NCBI Taxonomy" id="44689"/>
    <lineage>
        <taxon>Eukaryota</taxon>
        <taxon>Amoebozoa</taxon>
        <taxon>Evosea</taxon>
        <taxon>Eumycetozoa</taxon>
        <taxon>Dictyostelia</taxon>
        <taxon>Dictyosteliales</taxon>
        <taxon>Dictyosteliaceae</taxon>
        <taxon>Dictyostelium</taxon>
    </lineage>
</organism>